<accession>B5Z6S2</accession>
<gene>
    <name evidence="1" type="primary">murI</name>
    <name type="ordered locus">HPG27_509</name>
</gene>
<protein>
    <recommendedName>
        <fullName evidence="1">Glutamate racemase</fullName>
        <ecNumber evidence="1">5.1.1.3</ecNumber>
    </recommendedName>
</protein>
<evidence type="ECO:0000255" key="1">
    <source>
        <dbReference type="HAMAP-Rule" id="MF_00258"/>
    </source>
</evidence>
<reference key="1">
    <citation type="journal article" date="2009" name="J. Bacteriol.">
        <title>The complete genome sequence of Helicobacter pylori strain G27.</title>
        <authorList>
            <person name="Baltrus D.A."/>
            <person name="Amieva M.R."/>
            <person name="Covacci A."/>
            <person name="Lowe T.M."/>
            <person name="Merrell D.S."/>
            <person name="Ottemann K.M."/>
            <person name="Stein M."/>
            <person name="Salama N.R."/>
            <person name="Guillemin K."/>
        </authorList>
    </citation>
    <scope>NUCLEOTIDE SEQUENCE [LARGE SCALE GENOMIC DNA]</scope>
    <source>
        <strain>G27</strain>
    </source>
</reference>
<organism>
    <name type="scientific">Helicobacter pylori (strain G27)</name>
    <dbReference type="NCBI Taxonomy" id="563041"/>
    <lineage>
        <taxon>Bacteria</taxon>
        <taxon>Pseudomonadati</taxon>
        <taxon>Campylobacterota</taxon>
        <taxon>Epsilonproteobacteria</taxon>
        <taxon>Campylobacterales</taxon>
        <taxon>Helicobacteraceae</taxon>
        <taxon>Helicobacter</taxon>
    </lineage>
</organism>
<sequence length="255" mass="28488">MKIGVFDSGVGGFSVLKSLLKAQLFDEIIYYGDSARVPYGTKDPTTIKQFGLEALDFFKPHQIKLLIVACNTASALALEEMQKHSKIPIVGVIEPSILAIKQQVKEKNAPILVLGTKATIQSNAYDNALKQQGYLNVSHLATSLFVPLIEESILEGELLETCMRYYFTPLKILPEVIILGCTHFPLIAQKIEGYFMEHFALSTPPLLIHSGDAIVEYLQQKYALKKNAHAFPKVEFHASGDVIWLEKQAKEWLKL</sequence>
<feature type="chain" id="PRO_1000114047" description="Glutamate racemase">
    <location>
        <begin position="1"/>
        <end position="255"/>
    </location>
</feature>
<feature type="active site" description="Proton donor/acceptor" evidence="1">
    <location>
        <position position="70"/>
    </location>
</feature>
<feature type="active site" description="Proton donor/acceptor" evidence="1">
    <location>
        <position position="181"/>
    </location>
</feature>
<feature type="binding site" evidence="1">
    <location>
        <begin position="7"/>
        <end position="8"/>
    </location>
    <ligand>
        <name>substrate</name>
    </ligand>
</feature>
<feature type="binding site" evidence="1">
    <location>
        <begin position="39"/>
        <end position="40"/>
    </location>
    <ligand>
        <name>substrate</name>
    </ligand>
</feature>
<feature type="binding site" evidence="1">
    <location>
        <begin position="71"/>
        <end position="72"/>
    </location>
    <ligand>
        <name>substrate</name>
    </ligand>
</feature>
<feature type="binding site" evidence="1">
    <location>
        <begin position="182"/>
        <end position="183"/>
    </location>
    <ligand>
        <name>substrate</name>
    </ligand>
</feature>
<keyword id="KW-0133">Cell shape</keyword>
<keyword id="KW-0961">Cell wall biogenesis/degradation</keyword>
<keyword id="KW-0413">Isomerase</keyword>
<keyword id="KW-0573">Peptidoglycan synthesis</keyword>
<keyword id="KW-1185">Reference proteome</keyword>
<dbReference type="EC" id="5.1.1.3" evidence="1"/>
<dbReference type="EMBL" id="CP001173">
    <property type="protein sequence ID" value="ACI27271.1"/>
    <property type="molecule type" value="Genomic_DNA"/>
</dbReference>
<dbReference type="RefSeq" id="WP_000690342.1">
    <property type="nucleotide sequence ID" value="NC_011333.1"/>
</dbReference>
<dbReference type="SMR" id="B5Z6S2"/>
<dbReference type="KEGG" id="hpg:HPG27_509"/>
<dbReference type="HOGENOM" id="CLU_052344_0_2_7"/>
<dbReference type="UniPathway" id="UPA00219"/>
<dbReference type="Proteomes" id="UP000001735">
    <property type="component" value="Chromosome"/>
</dbReference>
<dbReference type="GO" id="GO:0008881">
    <property type="term" value="F:glutamate racemase activity"/>
    <property type="evidence" value="ECO:0007669"/>
    <property type="project" value="UniProtKB-UniRule"/>
</dbReference>
<dbReference type="GO" id="GO:0071555">
    <property type="term" value="P:cell wall organization"/>
    <property type="evidence" value="ECO:0007669"/>
    <property type="project" value="UniProtKB-KW"/>
</dbReference>
<dbReference type="GO" id="GO:0009252">
    <property type="term" value="P:peptidoglycan biosynthetic process"/>
    <property type="evidence" value="ECO:0007669"/>
    <property type="project" value="UniProtKB-UniRule"/>
</dbReference>
<dbReference type="GO" id="GO:0008360">
    <property type="term" value="P:regulation of cell shape"/>
    <property type="evidence" value="ECO:0007669"/>
    <property type="project" value="UniProtKB-KW"/>
</dbReference>
<dbReference type="FunFam" id="3.40.50.1860:FF:000001">
    <property type="entry name" value="Glutamate racemase"/>
    <property type="match status" value="1"/>
</dbReference>
<dbReference type="Gene3D" id="3.40.50.1860">
    <property type="match status" value="2"/>
</dbReference>
<dbReference type="HAMAP" id="MF_00258">
    <property type="entry name" value="Glu_racemase"/>
    <property type="match status" value="1"/>
</dbReference>
<dbReference type="InterPro" id="IPR015942">
    <property type="entry name" value="Asp/Glu/hydantoin_racemase"/>
</dbReference>
<dbReference type="InterPro" id="IPR001920">
    <property type="entry name" value="Asp/Glu_race"/>
</dbReference>
<dbReference type="InterPro" id="IPR018187">
    <property type="entry name" value="Asp/Glu_racemase_AS_1"/>
</dbReference>
<dbReference type="InterPro" id="IPR033134">
    <property type="entry name" value="Asp/Glu_racemase_AS_2"/>
</dbReference>
<dbReference type="InterPro" id="IPR004391">
    <property type="entry name" value="Glu_race"/>
</dbReference>
<dbReference type="NCBIfam" id="TIGR00067">
    <property type="entry name" value="glut_race"/>
    <property type="match status" value="1"/>
</dbReference>
<dbReference type="PANTHER" id="PTHR21198">
    <property type="entry name" value="GLUTAMATE RACEMASE"/>
    <property type="match status" value="1"/>
</dbReference>
<dbReference type="PANTHER" id="PTHR21198:SF2">
    <property type="entry name" value="GLUTAMATE RACEMASE"/>
    <property type="match status" value="1"/>
</dbReference>
<dbReference type="Pfam" id="PF01177">
    <property type="entry name" value="Asp_Glu_race"/>
    <property type="match status" value="1"/>
</dbReference>
<dbReference type="SUPFAM" id="SSF53681">
    <property type="entry name" value="Aspartate/glutamate racemase"/>
    <property type="match status" value="2"/>
</dbReference>
<dbReference type="PROSITE" id="PS00923">
    <property type="entry name" value="ASP_GLU_RACEMASE_1"/>
    <property type="match status" value="1"/>
</dbReference>
<dbReference type="PROSITE" id="PS00924">
    <property type="entry name" value="ASP_GLU_RACEMASE_2"/>
    <property type="match status" value="1"/>
</dbReference>
<name>MURI_HELPG</name>
<proteinExistence type="inferred from homology"/>
<comment type="function">
    <text evidence="1">Provides the (R)-glutamate required for cell wall biosynthesis.</text>
</comment>
<comment type="catalytic activity">
    <reaction evidence="1">
        <text>L-glutamate = D-glutamate</text>
        <dbReference type="Rhea" id="RHEA:12813"/>
        <dbReference type="ChEBI" id="CHEBI:29985"/>
        <dbReference type="ChEBI" id="CHEBI:29986"/>
        <dbReference type="EC" id="5.1.1.3"/>
    </reaction>
</comment>
<comment type="pathway">
    <text evidence="1">Cell wall biogenesis; peptidoglycan biosynthesis.</text>
</comment>
<comment type="similarity">
    <text evidence="1">Belongs to the aspartate/glutamate racemases family.</text>
</comment>